<proteinExistence type="inferred from homology"/>
<name>RL32_CORK4</name>
<sequence length="55" mass="6295">MAVPKRRMSRANTHTRRSQWKANNAPLQEVRVNGNTTRLPRRLVKAAQLGLVETD</sequence>
<evidence type="ECO:0000255" key="1">
    <source>
        <dbReference type="HAMAP-Rule" id="MF_00340"/>
    </source>
</evidence>
<evidence type="ECO:0000256" key="2">
    <source>
        <dbReference type="SAM" id="MobiDB-lite"/>
    </source>
</evidence>
<evidence type="ECO:0000305" key="3"/>
<gene>
    <name evidence="1" type="primary">rpmF</name>
    <name type="ordered locus">ckrop_0484</name>
</gene>
<reference key="1">
    <citation type="journal article" date="2008" name="J. Biotechnol.">
        <title>Ultrafast pyrosequencing of Corynebacterium kroppenstedtii DSM44385 revealed insights into the physiology of a lipophilic corynebacterium that lacks mycolic acids.</title>
        <authorList>
            <person name="Tauch A."/>
            <person name="Schneider J."/>
            <person name="Szczepanowski R."/>
            <person name="Tilker A."/>
            <person name="Viehoever P."/>
            <person name="Gartemann K.-H."/>
            <person name="Arnold W."/>
            <person name="Blom J."/>
            <person name="Brinkrolf K."/>
            <person name="Brune I."/>
            <person name="Goetker S."/>
            <person name="Weisshaar B."/>
            <person name="Goesmann A."/>
            <person name="Droege M."/>
            <person name="Puehler A."/>
        </authorList>
    </citation>
    <scope>NUCLEOTIDE SEQUENCE [LARGE SCALE GENOMIC DNA]</scope>
    <source>
        <strain>DSM 44385 / JCM 11950 / CIP 105744 / CCUG 35717</strain>
    </source>
</reference>
<protein>
    <recommendedName>
        <fullName evidence="1">Large ribosomal subunit protein bL32</fullName>
    </recommendedName>
    <alternativeName>
        <fullName evidence="3">50S ribosomal protein L32</fullName>
    </alternativeName>
</protein>
<accession>C4LHF5</accession>
<dbReference type="EMBL" id="CP001620">
    <property type="protein sequence ID" value="ACR17260.1"/>
    <property type="molecule type" value="Genomic_DNA"/>
</dbReference>
<dbReference type="RefSeq" id="WP_012731147.1">
    <property type="nucleotide sequence ID" value="NC_012704.1"/>
</dbReference>
<dbReference type="SMR" id="C4LHF5"/>
<dbReference type="STRING" id="645127.ckrop_0484"/>
<dbReference type="GeneID" id="92727070"/>
<dbReference type="KEGG" id="ckp:ckrop_0484"/>
<dbReference type="eggNOG" id="ENOG5033AVR">
    <property type="taxonomic scope" value="Bacteria"/>
</dbReference>
<dbReference type="HOGENOM" id="CLU_203263_0_0_11"/>
<dbReference type="OrthoDB" id="9807363at2"/>
<dbReference type="Proteomes" id="UP000001473">
    <property type="component" value="Chromosome"/>
</dbReference>
<dbReference type="GO" id="GO:0015934">
    <property type="term" value="C:large ribosomal subunit"/>
    <property type="evidence" value="ECO:0007669"/>
    <property type="project" value="InterPro"/>
</dbReference>
<dbReference type="GO" id="GO:0003735">
    <property type="term" value="F:structural constituent of ribosome"/>
    <property type="evidence" value="ECO:0007669"/>
    <property type="project" value="InterPro"/>
</dbReference>
<dbReference type="GO" id="GO:0006412">
    <property type="term" value="P:translation"/>
    <property type="evidence" value="ECO:0007669"/>
    <property type="project" value="UniProtKB-UniRule"/>
</dbReference>
<dbReference type="HAMAP" id="MF_00340">
    <property type="entry name" value="Ribosomal_bL32"/>
    <property type="match status" value="1"/>
</dbReference>
<dbReference type="InterPro" id="IPR002677">
    <property type="entry name" value="Ribosomal_bL32"/>
</dbReference>
<dbReference type="InterPro" id="IPR011332">
    <property type="entry name" value="Ribosomal_zn-bd"/>
</dbReference>
<dbReference type="NCBIfam" id="TIGR01031">
    <property type="entry name" value="rpmF_bact"/>
    <property type="match status" value="1"/>
</dbReference>
<dbReference type="Pfam" id="PF01783">
    <property type="entry name" value="Ribosomal_L32p"/>
    <property type="match status" value="1"/>
</dbReference>
<dbReference type="SUPFAM" id="SSF57829">
    <property type="entry name" value="Zn-binding ribosomal proteins"/>
    <property type="match status" value="1"/>
</dbReference>
<comment type="similarity">
    <text evidence="1">Belongs to the bacterial ribosomal protein bL32 family.</text>
</comment>
<keyword id="KW-1185">Reference proteome</keyword>
<keyword id="KW-0687">Ribonucleoprotein</keyword>
<keyword id="KW-0689">Ribosomal protein</keyword>
<feature type="chain" id="PRO_1000205256" description="Large ribosomal subunit protein bL32">
    <location>
        <begin position="1"/>
        <end position="55"/>
    </location>
</feature>
<feature type="region of interest" description="Disordered" evidence="2">
    <location>
        <begin position="1"/>
        <end position="21"/>
    </location>
</feature>
<feature type="compositionally biased region" description="Basic residues" evidence="2">
    <location>
        <begin position="1"/>
        <end position="19"/>
    </location>
</feature>
<organism>
    <name type="scientific">Corynebacterium kroppenstedtii (strain DSM 44385 / JCM 11950 / CIP 105744 / CCUG 35717)</name>
    <dbReference type="NCBI Taxonomy" id="645127"/>
    <lineage>
        <taxon>Bacteria</taxon>
        <taxon>Bacillati</taxon>
        <taxon>Actinomycetota</taxon>
        <taxon>Actinomycetes</taxon>
        <taxon>Mycobacteriales</taxon>
        <taxon>Corynebacteriaceae</taxon>
        <taxon>Corynebacterium</taxon>
    </lineage>
</organism>